<gene>
    <name evidence="1" type="primary">xerD</name>
    <name type="ordered locus">LA_2483</name>
</gene>
<evidence type="ECO:0000255" key="1">
    <source>
        <dbReference type="HAMAP-Rule" id="MF_01807"/>
    </source>
</evidence>
<evidence type="ECO:0000255" key="2">
    <source>
        <dbReference type="PROSITE-ProRule" id="PRU01246"/>
    </source>
</evidence>
<evidence type="ECO:0000255" key="3">
    <source>
        <dbReference type="PROSITE-ProRule" id="PRU01248"/>
    </source>
</evidence>
<protein>
    <recommendedName>
        <fullName evidence="1">Tyrosine recombinase XerD</fullName>
    </recommendedName>
</protein>
<comment type="function">
    <text evidence="1">Site-specific tyrosine recombinase, which acts by catalyzing the cutting and rejoining of the recombining DNA molecules. The XerC-XerD complex is essential to convert dimers of the bacterial chromosome into monomers to permit their segregation at cell division. It also contributes to the segregational stability of plasmids.</text>
</comment>
<comment type="subunit">
    <text evidence="1">Forms a cyclic heterotetrameric complex composed of two molecules of XerC and two molecules of XerD.</text>
</comment>
<comment type="subcellular location">
    <subcellularLocation>
        <location evidence="1">Cytoplasm</location>
    </subcellularLocation>
</comment>
<comment type="similarity">
    <text evidence="1">Belongs to the 'phage' integrase family. XerD subfamily.</text>
</comment>
<proteinExistence type="inferred from homology"/>
<sequence length="298" mass="35073">MTSSHNNLLQNFQEYLSVEKGLSDNSIYSYGYDLNKFKNFLEKEHIDFLKVQADDIMRFLNEEKDRKISSKTIAREVVAIRQFYKFLKDEKKLDTNPTEKIETPEVMRSIPDYLTQDEIEELFASIKEDNLYELRDKCIFELLYSSGLRISEACNLRLNDMDLEGMTLTVEGKGGRQRLVPFGEKSLDILNRYLKQSRPFILKSRNCEYLFVSKKGSYINRKSVWRLLNHYIKRTSILKKVTPHTLRHSFATHLLENHADLKSVQELLGHIDIATTQIYTHMANKTLREVHKKFHPRG</sequence>
<keyword id="KW-0131">Cell cycle</keyword>
<keyword id="KW-0132">Cell division</keyword>
<keyword id="KW-0159">Chromosome partition</keyword>
<keyword id="KW-0963">Cytoplasm</keyword>
<keyword id="KW-0229">DNA integration</keyword>
<keyword id="KW-0233">DNA recombination</keyword>
<keyword id="KW-0238">DNA-binding</keyword>
<keyword id="KW-1185">Reference proteome</keyword>
<accession>Q7ZAM7</accession>
<organism>
    <name type="scientific">Leptospira interrogans serogroup Icterohaemorrhagiae serovar Lai (strain 56601)</name>
    <dbReference type="NCBI Taxonomy" id="189518"/>
    <lineage>
        <taxon>Bacteria</taxon>
        <taxon>Pseudomonadati</taxon>
        <taxon>Spirochaetota</taxon>
        <taxon>Spirochaetia</taxon>
        <taxon>Leptospirales</taxon>
        <taxon>Leptospiraceae</taxon>
        <taxon>Leptospira</taxon>
    </lineage>
</organism>
<dbReference type="EMBL" id="AE010300">
    <property type="protein sequence ID" value="AAN49682.1"/>
    <property type="molecule type" value="Genomic_DNA"/>
</dbReference>
<dbReference type="RefSeq" id="NP_712664.1">
    <property type="nucleotide sequence ID" value="NC_004342.2"/>
</dbReference>
<dbReference type="RefSeq" id="WP_000204200.1">
    <property type="nucleotide sequence ID" value="NC_004342.2"/>
</dbReference>
<dbReference type="SMR" id="Q7ZAM7"/>
<dbReference type="FunCoup" id="Q7ZAM7">
    <property type="interactions" value="159"/>
</dbReference>
<dbReference type="STRING" id="189518.LA_2483"/>
<dbReference type="PaxDb" id="189518-LA_2483"/>
<dbReference type="EnsemblBacteria" id="AAN49682">
    <property type="protein sequence ID" value="AAN49682"/>
    <property type="gene ID" value="LA_2483"/>
</dbReference>
<dbReference type="GeneID" id="61144777"/>
<dbReference type="KEGG" id="lil:LA_2483"/>
<dbReference type="PATRIC" id="fig|189518.3.peg.2462"/>
<dbReference type="HOGENOM" id="CLU_027562_9_6_12"/>
<dbReference type="InParanoid" id="Q7ZAM7"/>
<dbReference type="OrthoDB" id="9801717at2"/>
<dbReference type="PRO" id="PR:Q7ZAM7"/>
<dbReference type="Proteomes" id="UP000001408">
    <property type="component" value="Chromosome I"/>
</dbReference>
<dbReference type="GO" id="GO:0005737">
    <property type="term" value="C:cytoplasm"/>
    <property type="evidence" value="ECO:0007669"/>
    <property type="project" value="UniProtKB-SubCell"/>
</dbReference>
<dbReference type="GO" id="GO:0048476">
    <property type="term" value="C:Holliday junction resolvase complex"/>
    <property type="evidence" value="ECO:0000318"/>
    <property type="project" value="GO_Central"/>
</dbReference>
<dbReference type="GO" id="GO:0003677">
    <property type="term" value="F:DNA binding"/>
    <property type="evidence" value="ECO:0000318"/>
    <property type="project" value="GO_Central"/>
</dbReference>
<dbReference type="GO" id="GO:0009037">
    <property type="term" value="F:tyrosine-based site-specific recombinase activity"/>
    <property type="evidence" value="ECO:0000318"/>
    <property type="project" value="GO_Central"/>
</dbReference>
<dbReference type="GO" id="GO:0051301">
    <property type="term" value="P:cell division"/>
    <property type="evidence" value="ECO:0007669"/>
    <property type="project" value="UniProtKB-KW"/>
</dbReference>
<dbReference type="GO" id="GO:0007059">
    <property type="term" value="P:chromosome segregation"/>
    <property type="evidence" value="ECO:0000318"/>
    <property type="project" value="GO_Central"/>
</dbReference>
<dbReference type="GO" id="GO:0006310">
    <property type="term" value="P:DNA recombination"/>
    <property type="evidence" value="ECO:0000318"/>
    <property type="project" value="GO_Central"/>
</dbReference>
<dbReference type="GO" id="GO:0006313">
    <property type="term" value="P:DNA transposition"/>
    <property type="evidence" value="ECO:0007669"/>
    <property type="project" value="UniProtKB-UniRule"/>
</dbReference>
<dbReference type="GO" id="GO:0071139">
    <property type="term" value="P:resolution of DNA recombination intermediates"/>
    <property type="evidence" value="ECO:0000318"/>
    <property type="project" value="GO_Central"/>
</dbReference>
<dbReference type="CDD" id="cd00798">
    <property type="entry name" value="INT_XerDC_C"/>
    <property type="match status" value="1"/>
</dbReference>
<dbReference type="Gene3D" id="1.10.150.130">
    <property type="match status" value="1"/>
</dbReference>
<dbReference type="Gene3D" id="1.10.443.10">
    <property type="entry name" value="Intergrase catalytic core"/>
    <property type="match status" value="1"/>
</dbReference>
<dbReference type="HAMAP" id="MF_01808">
    <property type="entry name" value="Recomb_XerC_XerD"/>
    <property type="match status" value="1"/>
</dbReference>
<dbReference type="HAMAP" id="MF_01807">
    <property type="entry name" value="Recomb_XerD"/>
    <property type="match status" value="1"/>
</dbReference>
<dbReference type="InterPro" id="IPR044068">
    <property type="entry name" value="CB"/>
</dbReference>
<dbReference type="InterPro" id="IPR011010">
    <property type="entry name" value="DNA_brk_join_enz"/>
</dbReference>
<dbReference type="InterPro" id="IPR013762">
    <property type="entry name" value="Integrase-like_cat_sf"/>
</dbReference>
<dbReference type="InterPro" id="IPR002104">
    <property type="entry name" value="Integrase_catalytic"/>
</dbReference>
<dbReference type="InterPro" id="IPR010998">
    <property type="entry name" value="Integrase_recombinase_N"/>
</dbReference>
<dbReference type="InterPro" id="IPR004107">
    <property type="entry name" value="Integrase_SAM-like_N"/>
</dbReference>
<dbReference type="InterPro" id="IPR011932">
    <property type="entry name" value="Recomb_XerD"/>
</dbReference>
<dbReference type="InterPro" id="IPR023009">
    <property type="entry name" value="Tyrosine_recombinase_XerC/XerD"/>
</dbReference>
<dbReference type="InterPro" id="IPR050090">
    <property type="entry name" value="Tyrosine_recombinase_XerCD"/>
</dbReference>
<dbReference type="NCBIfam" id="NF001399">
    <property type="entry name" value="PRK00283.1"/>
    <property type="match status" value="1"/>
</dbReference>
<dbReference type="NCBIfam" id="NF040815">
    <property type="entry name" value="recomb_XerA_Arch"/>
    <property type="match status" value="1"/>
</dbReference>
<dbReference type="NCBIfam" id="TIGR02225">
    <property type="entry name" value="recomb_XerD"/>
    <property type="match status" value="1"/>
</dbReference>
<dbReference type="PANTHER" id="PTHR30349">
    <property type="entry name" value="PHAGE INTEGRASE-RELATED"/>
    <property type="match status" value="1"/>
</dbReference>
<dbReference type="PANTHER" id="PTHR30349:SF81">
    <property type="entry name" value="TYROSINE RECOMBINASE XERC"/>
    <property type="match status" value="1"/>
</dbReference>
<dbReference type="Pfam" id="PF02899">
    <property type="entry name" value="Phage_int_SAM_1"/>
    <property type="match status" value="1"/>
</dbReference>
<dbReference type="Pfam" id="PF00589">
    <property type="entry name" value="Phage_integrase"/>
    <property type="match status" value="1"/>
</dbReference>
<dbReference type="SUPFAM" id="SSF56349">
    <property type="entry name" value="DNA breaking-rejoining enzymes"/>
    <property type="match status" value="1"/>
</dbReference>
<dbReference type="PROSITE" id="PS51900">
    <property type="entry name" value="CB"/>
    <property type="match status" value="1"/>
</dbReference>
<dbReference type="PROSITE" id="PS51898">
    <property type="entry name" value="TYR_RECOMBINASE"/>
    <property type="match status" value="1"/>
</dbReference>
<reference key="1">
    <citation type="journal article" date="2003" name="Nature">
        <title>Unique physiological and pathogenic features of Leptospira interrogans revealed by whole-genome sequencing.</title>
        <authorList>
            <person name="Ren S.-X."/>
            <person name="Fu G."/>
            <person name="Jiang X.-G."/>
            <person name="Zeng R."/>
            <person name="Miao Y.-G."/>
            <person name="Xu H."/>
            <person name="Zhang Y.-X."/>
            <person name="Xiong H."/>
            <person name="Lu G."/>
            <person name="Lu L.-F."/>
            <person name="Jiang H.-Q."/>
            <person name="Jia J."/>
            <person name="Tu Y.-F."/>
            <person name="Jiang J.-X."/>
            <person name="Gu W.-Y."/>
            <person name="Zhang Y.-Q."/>
            <person name="Cai Z."/>
            <person name="Sheng H.-H."/>
            <person name="Yin H.-F."/>
            <person name="Zhang Y."/>
            <person name="Zhu G.-F."/>
            <person name="Wan M."/>
            <person name="Huang H.-L."/>
            <person name="Qian Z."/>
            <person name="Wang S.-Y."/>
            <person name="Ma W."/>
            <person name="Yao Z.-J."/>
            <person name="Shen Y."/>
            <person name="Qiang B.-Q."/>
            <person name="Xia Q.-C."/>
            <person name="Guo X.-K."/>
            <person name="Danchin A."/>
            <person name="Saint Girons I."/>
            <person name="Somerville R.L."/>
            <person name="Wen Y.-M."/>
            <person name="Shi M.-H."/>
            <person name="Chen Z."/>
            <person name="Xu J.-G."/>
            <person name="Zhao G.-P."/>
        </authorList>
    </citation>
    <scope>NUCLEOTIDE SEQUENCE [LARGE SCALE GENOMIC DNA]</scope>
    <source>
        <strain>56601</strain>
    </source>
</reference>
<feature type="chain" id="PRO_0000095393" description="Tyrosine recombinase XerD">
    <location>
        <begin position="1"/>
        <end position="298"/>
    </location>
</feature>
<feature type="domain" description="Core-binding (CB)" evidence="3">
    <location>
        <begin position="3"/>
        <end position="88"/>
    </location>
</feature>
<feature type="domain" description="Tyr recombinase" evidence="2">
    <location>
        <begin position="109"/>
        <end position="292"/>
    </location>
</feature>
<feature type="active site" evidence="1">
    <location>
        <position position="149"/>
    </location>
</feature>
<feature type="active site" evidence="1">
    <location>
        <position position="173"/>
    </location>
</feature>
<feature type="active site" evidence="1">
    <location>
        <position position="244"/>
    </location>
</feature>
<feature type="active site" evidence="1">
    <location>
        <position position="247"/>
    </location>
</feature>
<feature type="active site" evidence="1">
    <location>
        <position position="270"/>
    </location>
</feature>
<feature type="active site" description="O-(3'-phospho-DNA)-tyrosine intermediate" evidence="1">
    <location>
        <position position="279"/>
    </location>
</feature>
<name>XERD_LEPIN</name>